<comment type="function">
    <text evidence="1">Catalyzes the NADPH-dependent rearrangement and reduction of 1-deoxy-D-xylulose-5-phosphate (DXP) to 2-C-methyl-D-erythritol 4-phosphate (MEP).</text>
</comment>
<comment type="catalytic activity">
    <reaction evidence="1">
        <text>2-C-methyl-D-erythritol 4-phosphate + NADP(+) = 1-deoxy-D-xylulose 5-phosphate + NADPH + H(+)</text>
        <dbReference type="Rhea" id="RHEA:13717"/>
        <dbReference type="ChEBI" id="CHEBI:15378"/>
        <dbReference type="ChEBI" id="CHEBI:57783"/>
        <dbReference type="ChEBI" id="CHEBI:57792"/>
        <dbReference type="ChEBI" id="CHEBI:58262"/>
        <dbReference type="ChEBI" id="CHEBI:58349"/>
        <dbReference type="EC" id="1.1.1.267"/>
    </reaction>
    <physiologicalReaction direction="right-to-left" evidence="1">
        <dbReference type="Rhea" id="RHEA:13719"/>
    </physiologicalReaction>
</comment>
<comment type="cofactor">
    <cofactor evidence="1">
        <name>Mg(2+)</name>
        <dbReference type="ChEBI" id="CHEBI:18420"/>
    </cofactor>
    <cofactor evidence="1">
        <name>Mn(2+)</name>
        <dbReference type="ChEBI" id="CHEBI:29035"/>
    </cofactor>
</comment>
<comment type="pathway">
    <text evidence="1">Isoprenoid biosynthesis; isopentenyl diphosphate biosynthesis via DXP pathway; isopentenyl diphosphate from 1-deoxy-D-xylulose 5-phosphate: step 1/6.</text>
</comment>
<comment type="similarity">
    <text evidence="1">Belongs to the DXR family.</text>
</comment>
<organism>
    <name type="scientific">Dechloromonas aromatica (strain RCB)</name>
    <dbReference type="NCBI Taxonomy" id="159087"/>
    <lineage>
        <taxon>Bacteria</taxon>
        <taxon>Pseudomonadati</taxon>
        <taxon>Pseudomonadota</taxon>
        <taxon>Betaproteobacteria</taxon>
        <taxon>Rhodocyclales</taxon>
        <taxon>Azonexaceae</taxon>
        <taxon>Dechloromonas</taxon>
    </lineage>
</organism>
<keyword id="KW-0414">Isoprene biosynthesis</keyword>
<keyword id="KW-0464">Manganese</keyword>
<keyword id="KW-0479">Metal-binding</keyword>
<keyword id="KW-0521">NADP</keyword>
<keyword id="KW-0560">Oxidoreductase</keyword>
<evidence type="ECO:0000255" key="1">
    <source>
        <dbReference type="HAMAP-Rule" id="MF_00183"/>
    </source>
</evidence>
<accession>Q47F86</accession>
<proteinExistence type="inferred from homology"/>
<sequence length="398" mass="42681">MSSKLQNITVLGATGSIGVSTLDVIRRHPDRYRAFALCAHSQVDKLFEQCVEFRPRFAVLRDASLAATLSERCRSVGLDTEVRYGVEALIELSSLPEVDAVMAAIVGAAGLEPTLAAARAGKKVMLANKEVLVMAGELFMHAVREYGATLLPVDSEHNAIFQSLPADFARGLESCGVQKILLTASGGPFRNSPLADLANVTPEQACAHPNWVMGRKISVDSATMMNKGLEVIEAHWLFAAPPDMIQVVVHPQSVIHSAVQYADGSVLAQLGNPDMRTPIAYAMAWPERIAAGVEPLDLFKIARLDFSAPDFERFRCLQLAYDVLREGGTAPAILNAANEVAVAAFLDGHLPFLGIALLNEAVLQAMPAGPEGSLADVLAADAEARHLAGQLIRQQRFA</sequence>
<feature type="chain" id="PRO_0000163644" description="1-deoxy-D-xylulose 5-phosphate reductoisomerase">
    <location>
        <begin position="1"/>
        <end position="398"/>
    </location>
</feature>
<feature type="binding site" evidence="1">
    <location>
        <position position="14"/>
    </location>
    <ligand>
        <name>NADPH</name>
        <dbReference type="ChEBI" id="CHEBI:57783"/>
    </ligand>
</feature>
<feature type="binding site" evidence="1">
    <location>
        <position position="15"/>
    </location>
    <ligand>
        <name>NADPH</name>
        <dbReference type="ChEBI" id="CHEBI:57783"/>
    </ligand>
</feature>
<feature type="binding site" evidence="1">
    <location>
        <position position="16"/>
    </location>
    <ligand>
        <name>NADPH</name>
        <dbReference type="ChEBI" id="CHEBI:57783"/>
    </ligand>
</feature>
<feature type="binding site" evidence="1">
    <location>
        <position position="17"/>
    </location>
    <ligand>
        <name>NADPH</name>
        <dbReference type="ChEBI" id="CHEBI:57783"/>
    </ligand>
</feature>
<feature type="binding site" evidence="1">
    <location>
        <position position="42"/>
    </location>
    <ligand>
        <name>NADPH</name>
        <dbReference type="ChEBI" id="CHEBI:57783"/>
    </ligand>
</feature>
<feature type="binding site" evidence="1">
    <location>
        <position position="128"/>
    </location>
    <ligand>
        <name>NADPH</name>
        <dbReference type="ChEBI" id="CHEBI:57783"/>
    </ligand>
</feature>
<feature type="binding site" evidence="1">
    <location>
        <position position="129"/>
    </location>
    <ligand>
        <name>1-deoxy-D-xylulose 5-phosphate</name>
        <dbReference type="ChEBI" id="CHEBI:57792"/>
    </ligand>
</feature>
<feature type="binding site" evidence="1">
    <location>
        <position position="130"/>
    </location>
    <ligand>
        <name>NADPH</name>
        <dbReference type="ChEBI" id="CHEBI:57783"/>
    </ligand>
</feature>
<feature type="binding site" evidence="1">
    <location>
        <position position="154"/>
    </location>
    <ligand>
        <name>Mn(2+)</name>
        <dbReference type="ChEBI" id="CHEBI:29035"/>
    </ligand>
</feature>
<feature type="binding site" evidence="1">
    <location>
        <position position="155"/>
    </location>
    <ligand>
        <name>1-deoxy-D-xylulose 5-phosphate</name>
        <dbReference type="ChEBI" id="CHEBI:57792"/>
    </ligand>
</feature>
<feature type="binding site" evidence="1">
    <location>
        <position position="156"/>
    </location>
    <ligand>
        <name>1-deoxy-D-xylulose 5-phosphate</name>
        <dbReference type="ChEBI" id="CHEBI:57792"/>
    </ligand>
</feature>
<feature type="binding site" evidence="1">
    <location>
        <position position="156"/>
    </location>
    <ligand>
        <name>Mn(2+)</name>
        <dbReference type="ChEBI" id="CHEBI:29035"/>
    </ligand>
</feature>
<feature type="binding site" evidence="1">
    <location>
        <position position="185"/>
    </location>
    <ligand>
        <name>1-deoxy-D-xylulose 5-phosphate</name>
        <dbReference type="ChEBI" id="CHEBI:57792"/>
    </ligand>
</feature>
<feature type="binding site" evidence="1">
    <location>
        <position position="208"/>
    </location>
    <ligand>
        <name>1-deoxy-D-xylulose 5-phosphate</name>
        <dbReference type="ChEBI" id="CHEBI:57792"/>
    </ligand>
</feature>
<feature type="binding site" evidence="1">
    <location>
        <position position="214"/>
    </location>
    <ligand>
        <name>NADPH</name>
        <dbReference type="ChEBI" id="CHEBI:57783"/>
    </ligand>
</feature>
<feature type="binding site" evidence="1">
    <location>
        <position position="221"/>
    </location>
    <ligand>
        <name>1-deoxy-D-xylulose 5-phosphate</name>
        <dbReference type="ChEBI" id="CHEBI:57792"/>
    </ligand>
</feature>
<feature type="binding site" evidence="1">
    <location>
        <position position="226"/>
    </location>
    <ligand>
        <name>1-deoxy-D-xylulose 5-phosphate</name>
        <dbReference type="ChEBI" id="CHEBI:57792"/>
    </ligand>
</feature>
<feature type="binding site" evidence="1">
    <location>
        <position position="227"/>
    </location>
    <ligand>
        <name>1-deoxy-D-xylulose 5-phosphate</name>
        <dbReference type="ChEBI" id="CHEBI:57792"/>
    </ligand>
</feature>
<feature type="binding site" evidence="1">
    <location>
        <position position="230"/>
    </location>
    <ligand>
        <name>1-deoxy-D-xylulose 5-phosphate</name>
        <dbReference type="ChEBI" id="CHEBI:57792"/>
    </ligand>
</feature>
<feature type="binding site" evidence="1">
    <location>
        <position position="230"/>
    </location>
    <ligand>
        <name>Mn(2+)</name>
        <dbReference type="ChEBI" id="CHEBI:29035"/>
    </ligand>
</feature>
<name>DXR_DECAR</name>
<protein>
    <recommendedName>
        <fullName evidence="1">1-deoxy-D-xylulose 5-phosphate reductoisomerase</fullName>
        <shortName evidence="1">DXP reductoisomerase</shortName>
        <ecNumber evidence="1">1.1.1.267</ecNumber>
    </recommendedName>
    <alternativeName>
        <fullName evidence="1">1-deoxyxylulose-5-phosphate reductoisomerase</fullName>
    </alternativeName>
    <alternativeName>
        <fullName evidence="1">2-C-methyl-D-erythritol 4-phosphate synthase</fullName>
    </alternativeName>
</protein>
<dbReference type="EC" id="1.1.1.267" evidence="1"/>
<dbReference type="EMBL" id="CP000089">
    <property type="protein sequence ID" value="AAZ46495.1"/>
    <property type="molecule type" value="Genomic_DNA"/>
</dbReference>
<dbReference type="SMR" id="Q47F86"/>
<dbReference type="STRING" id="159087.Daro_1748"/>
<dbReference type="KEGG" id="dar:Daro_1748"/>
<dbReference type="eggNOG" id="COG0743">
    <property type="taxonomic scope" value="Bacteria"/>
</dbReference>
<dbReference type="HOGENOM" id="CLU_035714_4_0_4"/>
<dbReference type="OrthoDB" id="9806546at2"/>
<dbReference type="UniPathway" id="UPA00056">
    <property type="reaction ID" value="UER00092"/>
</dbReference>
<dbReference type="GO" id="GO:0030604">
    <property type="term" value="F:1-deoxy-D-xylulose-5-phosphate reductoisomerase activity"/>
    <property type="evidence" value="ECO:0007669"/>
    <property type="project" value="UniProtKB-UniRule"/>
</dbReference>
<dbReference type="GO" id="GO:0030145">
    <property type="term" value="F:manganese ion binding"/>
    <property type="evidence" value="ECO:0007669"/>
    <property type="project" value="TreeGrafter"/>
</dbReference>
<dbReference type="GO" id="GO:0070402">
    <property type="term" value="F:NADPH binding"/>
    <property type="evidence" value="ECO:0007669"/>
    <property type="project" value="InterPro"/>
</dbReference>
<dbReference type="GO" id="GO:0051484">
    <property type="term" value="P:isopentenyl diphosphate biosynthetic process, methylerythritol 4-phosphate pathway involved in terpenoid biosynthetic process"/>
    <property type="evidence" value="ECO:0007669"/>
    <property type="project" value="TreeGrafter"/>
</dbReference>
<dbReference type="FunFam" id="3.40.50.720:FF:000045">
    <property type="entry name" value="1-deoxy-D-xylulose 5-phosphate reductoisomerase"/>
    <property type="match status" value="1"/>
</dbReference>
<dbReference type="Gene3D" id="1.10.1740.10">
    <property type="match status" value="1"/>
</dbReference>
<dbReference type="Gene3D" id="3.40.50.720">
    <property type="entry name" value="NAD(P)-binding Rossmann-like Domain"/>
    <property type="match status" value="1"/>
</dbReference>
<dbReference type="HAMAP" id="MF_00183">
    <property type="entry name" value="DXP_reductoisom"/>
    <property type="match status" value="1"/>
</dbReference>
<dbReference type="InterPro" id="IPR003821">
    <property type="entry name" value="DXP_reductoisomerase"/>
</dbReference>
<dbReference type="InterPro" id="IPR013644">
    <property type="entry name" value="DXP_reductoisomerase_C"/>
</dbReference>
<dbReference type="InterPro" id="IPR013512">
    <property type="entry name" value="DXP_reductoisomerase_N"/>
</dbReference>
<dbReference type="InterPro" id="IPR026877">
    <property type="entry name" value="DXPR_C"/>
</dbReference>
<dbReference type="InterPro" id="IPR036169">
    <property type="entry name" value="DXPR_C_sf"/>
</dbReference>
<dbReference type="InterPro" id="IPR036291">
    <property type="entry name" value="NAD(P)-bd_dom_sf"/>
</dbReference>
<dbReference type="NCBIfam" id="TIGR00243">
    <property type="entry name" value="Dxr"/>
    <property type="match status" value="1"/>
</dbReference>
<dbReference type="NCBIfam" id="NF003938">
    <property type="entry name" value="PRK05447.1-1"/>
    <property type="match status" value="1"/>
</dbReference>
<dbReference type="NCBIfam" id="NF009114">
    <property type="entry name" value="PRK12464.1"/>
    <property type="match status" value="1"/>
</dbReference>
<dbReference type="PANTHER" id="PTHR30525">
    <property type="entry name" value="1-DEOXY-D-XYLULOSE 5-PHOSPHATE REDUCTOISOMERASE"/>
    <property type="match status" value="1"/>
</dbReference>
<dbReference type="PANTHER" id="PTHR30525:SF0">
    <property type="entry name" value="1-DEOXY-D-XYLULOSE 5-PHOSPHATE REDUCTOISOMERASE, CHLOROPLASTIC"/>
    <property type="match status" value="1"/>
</dbReference>
<dbReference type="Pfam" id="PF08436">
    <property type="entry name" value="DXP_redisom_C"/>
    <property type="match status" value="1"/>
</dbReference>
<dbReference type="Pfam" id="PF02670">
    <property type="entry name" value="DXP_reductoisom"/>
    <property type="match status" value="1"/>
</dbReference>
<dbReference type="Pfam" id="PF13288">
    <property type="entry name" value="DXPR_C"/>
    <property type="match status" value="1"/>
</dbReference>
<dbReference type="PIRSF" id="PIRSF006205">
    <property type="entry name" value="Dxp_reductismrs"/>
    <property type="match status" value="1"/>
</dbReference>
<dbReference type="SUPFAM" id="SSF69055">
    <property type="entry name" value="1-deoxy-D-xylulose-5-phosphate reductoisomerase, C-terminal domain"/>
    <property type="match status" value="1"/>
</dbReference>
<dbReference type="SUPFAM" id="SSF55347">
    <property type="entry name" value="Glyceraldehyde-3-phosphate dehydrogenase-like, C-terminal domain"/>
    <property type="match status" value="1"/>
</dbReference>
<dbReference type="SUPFAM" id="SSF51735">
    <property type="entry name" value="NAD(P)-binding Rossmann-fold domains"/>
    <property type="match status" value="1"/>
</dbReference>
<gene>
    <name evidence="1" type="primary">dxr</name>
    <name type="ordered locus">Daro_1748</name>
</gene>
<reference key="1">
    <citation type="journal article" date="2009" name="BMC Genomics">
        <title>Metabolic analysis of the soil microbe Dechloromonas aromatica str. RCB: indications of a surprisingly complex life-style and cryptic anaerobic pathways for aromatic degradation.</title>
        <authorList>
            <person name="Salinero K.K."/>
            <person name="Keller K."/>
            <person name="Feil W.S."/>
            <person name="Feil H."/>
            <person name="Trong S."/>
            <person name="Di Bartolo G."/>
            <person name="Lapidus A."/>
        </authorList>
    </citation>
    <scope>NUCLEOTIDE SEQUENCE [LARGE SCALE GENOMIC DNA]</scope>
    <source>
        <strain>RCB</strain>
    </source>
</reference>